<organism>
    <name type="scientific">Escherichia coli (strain K12)</name>
    <dbReference type="NCBI Taxonomy" id="83333"/>
    <lineage>
        <taxon>Bacteria</taxon>
        <taxon>Pseudomonadati</taxon>
        <taxon>Pseudomonadota</taxon>
        <taxon>Gammaproteobacteria</taxon>
        <taxon>Enterobacterales</taxon>
        <taxon>Enterobacteriaceae</taxon>
        <taxon>Escherichia</taxon>
    </lineage>
</organism>
<name>BORD_ECOLI</name>
<proteinExistence type="inferred from homology"/>
<protein>
    <recommendedName>
        <fullName evidence="2">Prophage lipoprotein Bor homolog</fullName>
    </recommendedName>
    <alternativeName>
        <fullName>Lipoprotein Bor homolog from lambdoid prophage DLP12</fullName>
    </alternativeName>
</protein>
<accession>P77330</accession>
<accession>Q2MBM3</accession>
<keyword id="KW-1003">Cell membrane</keyword>
<keyword id="KW-0449">Lipoprotein</keyword>
<keyword id="KW-0472">Membrane</keyword>
<keyword id="KW-0564">Palmitate</keyword>
<keyword id="KW-1185">Reference proteome</keyword>
<keyword id="KW-0732">Signal</keyword>
<comment type="subcellular location">
    <subcellularLocation>
        <location evidence="2">Cell membrane</location>
        <topology evidence="2">Lipid-anchor</topology>
    </subcellularLocation>
</comment>
<comment type="miscellaneous">
    <text>Encoded by the cryptic lambdoid prophage DLP12.</text>
</comment>
<comment type="similarity">
    <text evidence="2">Belongs to the lambda phage bor family.</text>
</comment>
<reference key="1">
    <citation type="submission" date="1997-01" db="EMBL/GenBank/DDBJ databases">
        <title>Sequence of minutes 4-25 of Escherichia coli.</title>
        <authorList>
            <person name="Chung E."/>
            <person name="Allen E."/>
            <person name="Araujo R."/>
            <person name="Aparicio A.M."/>
            <person name="Davis K."/>
            <person name="Duncan M."/>
            <person name="Federspiel N."/>
            <person name="Hyman R."/>
            <person name="Kalman S."/>
            <person name="Komp C."/>
            <person name="Kurdi O."/>
            <person name="Lew H."/>
            <person name="Lin D."/>
            <person name="Namath A."/>
            <person name="Oefner P."/>
            <person name="Roberts D."/>
            <person name="Schramm S."/>
            <person name="Davis R.W."/>
        </authorList>
    </citation>
    <scope>NUCLEOTIDE SEQUENCE [LARGE SCALE GENOMIC DNA]</scope>
    <source>
        <strain>K12 / MG1655 / ATCC 47076</strain>
    </source>
</reference>
<reference key="2">
    <citation type="journal article" date="1997" name="Science">
        <title>The complete genome sequence of Escherichia coli K-12.</title>
        <authorList>
            <person name="Blattner F.R."/>
            <person name="Plunkett G. III"/>
            <person name="Bloch C.A."/>
            <person name="Perna N.T."/>
            <person name="Burland V."/>
            <person name="Riley M."/>
            <person name="Collado-Vides J."/>
            <person name="Glasner J.D."/>
            <person name="Rode C.K."/>
            <person name="Mayhew G.F."/>
            <person name="Gregor J."/>
            <person name="Davis N.W."/>
            <person name="Kirkpatrick H.A."/>
            <person name="Goeden M.A."/>
            <person name="Rose D.J."/>
            <person name="Mau B."/>
            <person name="Shao Y."/>
        </authorList>
    </citation>
    <scope>NUCLEOTIDE SEQUENCE [LARGE SCALE GENOMIC DNA]</scope>
    <source>
        <strain>K12 / MG1655 / ATCC 47076</strain>
    </source>
</reference>
<reference key="3">
    <citation type="journal article" date="2006" name="Mol. Syst. Biol.">
        <title>Highly accurate genome sequences of Escherichia coli K-12 strains MG1655 and W3110.</title>
        <authorList>
            <person name="Hayashi K."/>
            <person name="Morooka N."/>
            <person name="Yamamoto Y."/>
            <person name="Fujita K."/>
            <person name="Isono K."/>
            <person name="Choi S."/>
            <person name="Ohtsubo E."/>
            <person name="Baba T."/>
            <person name="Wanner B.L."/>
            <person name="Mori H."/>
            <person name="Horiuchi T."/>
        </authorList>
    </citation>
    <scope>NUCLEOTIDE SEQUENCE [LARGE SCALE GENOMIC DNA]</scope>
    <source>
        <strain>K12 / W3110 / ATCC 27325 / DSM 5911</strain>
    </source>
</reference>
<gene>
    <name type="primary">borD</name>
    <name type="synonym">ybcU</name>
    <name type="ordered locus">b0557</name>
    <name type="ordered locus">JW0546</name>
</gene>
<dbReference type="EMBL" id="U82598">
    <property type="protein sequence ID" value="AAB40753.1"/>
    <property type="molecule type" value="Genomic_DNA"/>
</dbReference>
<dbReference type="EMBL" id="U00096">
    <property type="protein sequence ID" value="AAC73658.1"/>
    <property type="molecule type" value="Genomic_DNA"/>
</dbReference>
<dbReference type="EMBL" id="AP009048">
    <property type="protein sequence ID" value="BAE76333.1"/>
    <property type="molecule type" value="Genomic_DNA"/>
</dbReference>
<dbReference type="PIR" id="C64788">
    <property type="entry name" value="C64788"/>
</dbReference>
<dbReference type="RefSeq" id="NP_415089.1">
    <property type="nucleotide sequence ID" value="NC_000913.3"/>
</dbReference>
<dbReference type="BioGRID" id="4263499">
    <property type="interactions" value="8"/>
</dbReference>
<dbReference type="FunCoup" id="P77330">
    <property type="interactions" value="4"/>
</dbReference>
<dbReference type="STRING" id="511145.b0557"/>
<dbReference type="PaxDb" id="511145-b0557"/>
<dbReference type="EnsemblBacteria" id="AAC73658">
    <property type="protein sequence ID" value="AAC73658"/>
    <property type="gene ID" value="b0557"/>
</dbReference>
<dbReference type="GeneID" id="948980"/>
<dbReference type="KEGG" id="ecj:JW0546"/>
<dbReference type="KEGG" id="eco:b0557"/>
<dbReference type="KEGG" id="ecoc:C3026_02755"/>
<dbReference type="PATRIC" id="fig|1411691.4.peg.1718"/>
<dbReference type="EchoBASE" id="EB3401"/>
<dbReference type="eggNOG" id="ENOG5032U6W">
    <property type="taxonomic scope" value="Bacteria"/>
</dbReference>
<dbReference type="HOGENOM" id="CLU_173183_0_1_6"/>
<dbReference type="InParanoid" id="P77330"/>
<dbReference type="OMA" id="HHFFISG"/>
<dbReference type="OrthoDB" id="332829at2"/>
<dbReference type="BioCyc" id="EcoCyc:G6312-MONOMER"/>
<dbReference type="PRO" id="PR:P77330"/>
<dbReference type="Proteomes" id="UP000000625">
    <property type="component" value="Chromosome"/>
</dbReference>
<dbReference type="GO" id="GO:0005886">
    <property type="term" value="C:plasma membrane"/>
    <property type="evidence" value="ECO:0007669"/>
    <property type="project" value="UniProtKB-SubCell"/>
</dbReference>
<dbReference type="GO" id="GO:0071286">
    <property type="term" value="P:cellular response to magnesium ion"/>
    <property type="evidence" value="ECO:0000270"/>
    <property type="project" value="EcoCyc"/>
</dbReference>
<dbReference type="InterPro" id="IPR010438">
    <property type="entry name" value="Lambda_Bor"/>
</dbReference>
<dbReference type="Pfam" id="PF06291">
    <property type="entry name" value="Lambda_Bor"/>
    <property type="match status" value="1"/>
</dbReference>
<dbReference type="PROSITE" id="PS51257">
    <property type="entry name" value="PROKAR_LIPOPROTEIN"/>
    <property type="match status" value="1"/>
</dbReference>
<feature type="signal peptide" evidence="1">
    <location>
        <begin position="1"/>
        <end position="16"/>
    </location>
</feature>
<feature type="chain" id="PRO_0000003368" description="Prophage lipoprotein Bor homolog">
    <location>
        <begin position="17"/>
        <end position="97"/>
    </location>
</feature>
<feature type="lipid moiety-binding region" description="N-palmitoyl cysteine" evidence="1">
    <location>
        <position position="17"/>
    </location>
</feature>
<feature type="lipid moiety-binding region" description="S-diacylglycerol cysteine" evidence="1">
    <location>
        <position position="17"/>
    </location>
</feature>
<evidence type="ECO:0000255" key="1">
    <source>
        <dbReference type="PROSITE-ProRule" id="PRU00303"/>
    </source>
</evidence>
<evidence type="ECO:0000305" key="2"/>
<sequence length="97" mass="10447">MKKMLLATALALLITGCAQQTFTVQNKQTAVAPKETITHHFFVSGIGQKKTVDAAKICGGAENVVKTETQQTFVNGLLGFITLGIYTPLEARVYCSK</sequence>